<gene>
    <name evidence="1" type="primary">hemE</name>
    <name type="ordered locus">Oant_0854</name>
</gene>
<evidence type="ECO:0000255" key="1">
    <source>
        <dbReference type="HAMAP-Rule" id="MF_00218"/>
    </source>
</evidence>
<feature type="chain" id="PRO_1000023933" description="Uroporphyrinogen decarboxylase">
    <location>
        <begin position="1"/>
        <end position="341"/>
    </location>
</feature>
<feature type="binding site" evidence="1">
    <location>
        <begin position="23"/>
        <end position="27"/>
    </location>
    <ligand>
        <name>substrate</name>
    </ligand>
</feature>
<feature type="binding site" evidence="1">
    <location>
        <position position="73"/>
    </location>
    <ligand>
        <name>substrate</name>
    </ligand>
</feature>
<feature type="binding site" evidence="1">
    <location>
        <position position="148"/>
    </location>
    <ligand>
        <name>substrate</name>
    </ligand>
</feature>
<feature type="binding site" evidence="1">
    <location>
        <position position="203"/>
    </location>
    <ligand>
        <name>substrate</name>
    </ligand>
</feature>
<feature type="binding site" evidence="1">
    <location>
        <position position="318"/>
    </location>
    <ligand>
        <name>substrate</name>
    </ligand>
</feature>
<feature type="site" description="Transition state stabilizer" evidence="1">
    <location>
        <position position="73"/>
    </location>
</feature>
<keyword id="KW-0963">Cytoplasm</keyword>
<keyword id="KW-0210">Decarboxylase</keyword>
<keyword id="KW-0456">Lyase</keyword>
<keyword id="KW-0627">Porphyrin biosynthesis</keyword>
<keyword id="KW-1185">Reference proteome</keyword>
<sequence>MKRKVLRVIDGETVFPPPIWMMRQAGRYLPEYRETRKKAGSFLDLCYSPDLAVEVTLQPIRRFGFDAAILFSDILVIPHALGRDLRFEEGKGPLMTPIDADEIFWLETEGVAKRLEPVYETVRLLREQLPDETTLLGFCGAPWTVATYMIAGHGTPDQAPARLFAYRFPEAFEKLLNDLADVSAEYLIEQLDAGADAVQIFDSWSGVLDEDCFERFCIRPVARIVQKVRAVYPEARIIGFPKGAGMLYAGYREKTGVDALGLDWSVPFSFAAALQEEGAIQGNLDPLRVVAGGNALDEGVDTILERLGQGPLIFNLGHGITPQAPIENVQRMIDRIRGGKS</sequence>
<comment type="function">
    <text evidence="1">Catalyzes the decarboxylation of four acetate groups of uroporphyrinogen-III to yield coproporphyrinogen-III.</text>
</comment>
<comment type="catalytic activity">
    <reaction evidence="1">
        <text>uroporphyrinogen III + 4 H(+) = coproporphyrinogen III + 4 CO2</text>
        <dbReference type="Rhea" id="RHEA:19865"/>
        <dbReference type="ChEBI" id="CHEBI:15378"/>
        <dbReference type="ChEBI" id="CHEBI:16526"/>
        <dbReference type="ChEBI" id="CHEBI:57308"/>
        <dbReference type="ChEBI" id="CHEBI:57309"/>
        <dbReference type="EC" id="4.1.1.37"/>
    </reaction>
</comment>
<comment type="pathway">
    <text evidence="1">Porphyrin-containing compound metabolism; protoporphyrin-IX biosynthesis; coproporphyrinogen-III from 5-aminolevulinate: step 4/4.</text>
</comment>
<comment type="subunit">
    <text evidence="1">Homodimer.</text>
</comment>
<comment type="subcellular location">
    <subcellularLocation>
        <location evidence="1">Cytoplasm</location>
    </subcellularLocation>
</comment>
<comment type="similarity">
    <text evidence="1">Belongs to the uroporphyrinogen decarboxylase family.</text>
</comment>
<name>DCUP_BRUA4</name>
<dbReference type="EC" id="4.1.1.37" evidence="1"/>
<dbReference type="EMBL" id="CP000758">
    <property type="protein sequence ID" value="ABS13576.1"/>
    <property type="molecule type" value="Genomic_DNA"/>
</dbReference>
<dbReference type="RefSeq" id="WP_010657652.1">
    <property type="nucleotide sequence ID" value="NC_009667.1"/>
</dbReference>
<dbReference type="SMR" id="A6WX72"/>
<dbReference type="STRING" id="439375.Oant_0854"/>
<dbReference type="GeneID" id="61318700"/>
<dbReference type="KEGG" id="oan:Oant_0854"/>
<dbReference type="eggNOG" id="COG0407">
    <property type="taxonomic scope" value="Bacteria"/>
</dbReference>
<dbReference type="HOGENOM" id="CLU_040933_0_0_5"/>
<dbReference type="PhylomeDB" id="A6WX72"/>
<dbReference type="UniPathway" id="UPA00251">
    <property type="reaction ID" value="UER00321"/>
</dbReference>
<dbReference type="Proteomes" id="UP000002301">
    <property type="component" value="Chromosome 1"/>
</dbReference>
<dbReference type="GO" id="GO:0005829">
    <property type="term" value="C:cytosol"/>
    <property type="evidence" value="ECO:0007669"/>
    <property type="project" value="TreeGrafter"/>
</dbReference>
<dbReference type="GO" id="GO:0004853">
    <property type="term" value="F:uroporphyrinogen decarboxylase activity"/>
    <property type="evidence" value="ECO:0007669"/>
    <property type="project" value="UniProtKB-UniRule"/>
</dbReference>
<dbReference type="GO" id="GO:0019353">
    <property type="term" value="P:protoporphyrinogen IX biosynthetic process from glutamate"/>
    <property type="evidence" value="ECO:0007669"/>
    <property type="project" value="TreeGrafter"/>
</dbReference>
<dbReference type="CDD" id="cd00717">
    <property type="entry name" value="URO-D"/>
    <property type="match status" value="1"/>
</dbReference>
<dbReference type="FunFam" id="3.20.20.210:FF:000007">
    <property type="entry name" value="Uroporphyrinogen decarboxylase"/>
    <property type="match status" value="1"/>
</dbReference>
<dbReference type="Gene3D" id="3.20.20.210">
    <property type="match status" value="1"/>
</dbReference>
<dbReference type="HAMAP" id="MF_00218">
    <property type="entry name" value="URO_D"/>
    <property type="match status" value="1"/>
</dbReference>
<dbReference type="InterPro" id="IPR038071">
    <property type="entry name" value="UROD/MetE-like_sf"/>
</dbReference>
<dbReference type="InterPro" id="IPR006361">
    <property type="entry name" value="Uroporphyrinogen_deCO2ase_HemE"/>
</dbReference>
<dbReference type="InterPro" id="IPR000257">
    <property type="entry name" value="Uroporphyrinogen_deCOase"/>
</dbReference>
<dbReference type="NCBIfam" id="TIGR01464">
    <property type="entry name" value="hemE"/>
    <property type="match status" value="1"/>
</dbReference>
<dbReference type="PANTHER" id="PTHR21091">
    <property type="entry name" value="METHYLTETRAHYDROFOLATE:HOMOCYSTEINE METHYLTRANSFERASE RELATED"/>
    <property type="match status" value="1"/>
</dbReference>
<dbReference type="PANTHER" id="PTHR21091:SF169">
    <property type="entry name" value="UROPORPHYRINOGEN DECARBOXYLASE"/>
    <property type="match status" value="1"/>
</dbReference>
<dbReference type="Pfam" id="PF01208">
    <property type="entry name" value="URO-D"/>
    <property type="match status" value="1"/>
</dbReference>
<dbReference type="SUPFAM" id="SSF51726">
    <property type="entry name" value="UROD/MetE-like"/>
    <property type="match status" value="1"/>
</dbReference>
<dbReference type="PROSITE" id="PS00906">
    <property type="entry name" value="UROD_1"/>
    <property type="match status" value="1"/>
</dbReference>
<dbReference type="PROSITE" id="PS00907">
    <property type="entry name" value="UROD_2"/>
    <property type="match status" value="1"/>
</dbReference>
<protein>
    <recommendedName>
        <fullName evidence="1">Uroporphyrinogen decarboxylase</fullName>
        <shortName evidence="1">UPD</shortName>
        <shortName evidence="1">URO-D</shortName>
        <ecNumber evidence="1">4.1.1.37</ecNumber>
    </recommendedName>
</protein>
<proteinExistence type="inferred from homology"/>
<organism>
    <name type="scientific">Brucella anthropi (strain ATCC 49188 / DSM 6882 / CCUG 24695 / JCM 21032 / LMG 3331 / NBRC 15819 / NCTC 12168 / Alc 37)</name>
    <name type="common">Ochrobactrum anthropi</name>
    <dbReference type="NCBI Taxonomy" id="439375"/>
    <lineage>
        <taxon>Bacteria</taxon>
        <taxon>Pseudomonadati</taxon>
        <taxon>Pseudomonadota</taxon>
        <taxon>Alphaproteobacteria</taxon>
        <taxon>Hyphomicrobiales</taxon>
        <taxon>Brucellaceae</taxon>
        <taxon>Brucella/Ochrobactrum group</taxon>
        <taxon>Brucella</taxon>
    </lineage>
</organism>
<accession>A6WX72</accession>
<reference key="1">
    <citation type="journal article" date="2011" name="J. Bacteriol.">
        <title>Genome of Ochrobactrum anthropi ATCC 49188 T, a versatile opportunistic pathogen and symbiont of several eukaryotic hosts.</title>
        <authorList>
            <person name="Chain P.S."/>
            <person name="Lang D.M."/>
            <person name="Comerci D.J."/>
            <person name="Malfatti S.A."/>
            <person name="Vergez L.M."/>
            <person name="Shin M."/>
            <person name="Ugalde R.A."/>
            <person name="Garcia E."/>
            <person name="Tolmasky M.E."/>
        </authorList>
    </citation>
    <scope>NUCLEOTIDE SEQUENCE [LARGE SCALE GENOMIC DNA]</scope>
    <source>
        <strain>ATCC 49188 / DSM 6882 / CCUG 24695 / JCM 21032 / LMG 3331 / NBRC 15819 / NCTC 12168 / Alc 37</strain>
    </source>
</reference>